<evidence type="ECO:0000250" key="1"/>
<evidence type="ECO:0000255" key="2">
    <source>
        <dbReference type="HAMAP-Rule" id="MF_00403"/>
    </source>
</evidence>
<evidence type="ECO:0000305" key="3"/>
<accession>A4QKL6</accession>
<name>RR12_CAPBU</name>
<sequence length="123" mass="13764">MPTIKQLIRNTRQPIRNVTKSPALRGCPQRRGTCTRVYTITPKKPNSALRKVARVRLTSGFEITAYIPGIGHNLQEHSVVLVRGGRVKDLPGVRYHIVRGTLDAVGVKDRQQGRSKYGVKKPK</sequence>
<reference key="1">
    <citation type="submission" date="2007-03" db="EMBL/GenBank/DDBJ databases">
        <title>Sequencing analysis of Capsella bursa-pastoris JO22 chloroplast DNA.</title>
        <authorList>
            <person name="Hosouchi T."/>
            <person name="Tsuruoka H."/>
            <person name="Kotani H."/>
        </authorList>
    </citation>
    <scope>NUCLEOTIDE SEQUENCE [LARGE SCALE GENOMIC DNA]</scope>
</reference>
<organism>
    <name type="scientific">Capsella bursa-pastoris</name>
    <name type="common">Shepherd's purse</name>
    <name type="synonym">Thlaspi bursa-pastoris</name>
    <dbReference type="NCBI Taxonomy" id="3719"/>
    <lineage>
        <taxon>Eukaryota</taxon>
        <taxon>Viridiplantae</taxon>
        <taxon>Streptophyta</taxon>
        <taxon>Embryophyta</taxon>
        <taxon>Tracheophyta</taxon>
        <taxon>Spermatophyta</taxon>
        <taxon>Magnoliopsida</taxon>
        <taxon>eudicotyledons</taxon>
        <taxon>Gunneridae</taxon>
        <taxon>Pentapetalae</taxon>
        <taxon>rosids</taxon>
        <taxon>malvids</taxon>
        <taxon>Brassicales</taxon>
        <taxon>Brassicaceae</taxon>
        <taxon>Camelineae</taxon>
        <taxon>Capsella</taxon>
    </lineage>
</organism>
<gene>
    <name type="primary">rps12-A</name>
</gene>
<gene>
    <name type="primary">rps12-B</name>
</gene>
<geneLocation type="chloroplast"/>
<feature type="chain" id="PRO_0000296064" description="Small ribosomal subunit protein uS12cz/uS12cy">
    <location>
        <begin position="1"/>
        <end position="123"/>
    </location>
</feature>
<protein>
    <recommendedName>
        <fullName evidence="2">Small ribosomal subunit protein uS12cz/uS12cy</fullName>
    </recommendedName>
    <alternativeName>
        <fullName evidence="3">30S ribosomal protein S12, chloroplastic</fullName>
    </alternativeName>
</protein>
<comment type="function">
    <text evidence="1">With S4 and S5 plays an important role in translational accuracy. Located at the interface of the 30S and 50S subunits (By similarity).</text>
</comment>
<comment type="subunit">
    <text evidence="1">Part of the 30S ribosomal subunit.</text>
</comment>
<comment type="subcellular location">
    <subcellularLocation>
        <location>Plastid</location>
        <location>Chloroplast</location>
    </subcellularLocation>
</comment>
<comment type="similarity">
    <text evidence="3">Belongs to the universal ribosomal protein uS12 family.</text>
</comment>
<dbReference type="EMBL" id="AP009371">
    <property type="protein sequence ID" value="BAF50221.1"/>
    <property type="molecule type" value="Genomic_DNA"/>
</dbReference>
<dbReference type="EMBL" id="AP009371">
    <property type="protein sequence ID" value="BAF50244.1"/>
    <property type="molecule type" value="Genomic_DNA"/>
</dbReference>
<dbReference type="SMR" id="A4QKL6"/>
<dbReference type="GO" id="GO:0009507">
    <property type="term" value="C:chloroplast"/>
    <property type="evidence" value="ECO:0007669"/>
    <property type="project" value="UniProtKB-SubCell"/>
</dbReference>
<dbReference type="GO" id="GO:0015935">
    <property type="term" value="C:small ribosomal subunit"/>
    <property type="evidence" value="ECO:0007669"/>
    <property type="project" value="InterPro"/>
</dbReference>
<dbReference type="GO" id="GO:0019843">
    <property type="term" value="F:rRNA binding"/>
    <property type="evidence" value="ECO:0007669"/>
    <property type="project" value="UniProtKB-UniRule"/>
</dbReference>
<dbReference type="GO" id="GO:0003735">
    <property type="term" value="F:structural constituent of ribosome"/>
    <property type="evidence" value="ECO:0007669"/>
    <property type="project" value="InterPro"/>
</dbReference>
<dbReference type="GO" id="GO:0006412">
    <property type="term" value="P:translation"/>
    <property type="evidence" value="ECO:0007669"/>
    <property type="project" value="UniProtKB-UniRule"/>
</dbReference>
<dbReference type="CDD" id="cd03368">
    <property type="entry name" value="Ribosomal_S12"/>
    <property type="match status" value="1"/>
</dbReference>
<dbReference type="FunFam" id="2.40.50.140:FF:000008">
    <property type="entry name" value="30S ribosomal protein S12, chloroplastic"/>
    <property type="match status" value="1"/>
</dbReference>
<dbReference type="Gene3D" id="2.40.50.140">
    <property type="entry name" value="Nucleic acid-binding proteins"/>
    <property type="match status" value="1"/>
</dbReference>
<dbReference type="HAMAP" id="MF_00403_B">
    <property type="entry name" value="Ribosomal_uS12_B"/>
    <property type="match status" value="1"/>
</dbReference>
<dbReference type="InterPro" id="IPR012340">
    <property type="entry name" value="NA-bd_OB-fold"/>
</dbReference>
<dbReference type="InterPro" id="IPR006032">
    <property type="entry name" value="Ribosomal_uS12"/>
</dbReference>
<dbReference type="InterPro" id="IPR005679">
    <property type="entry name" value="Ribosomal_uS12_bac"/>
</dbReference>
<dbReference type="NCBIfam" id="TIGR00981">
    <property type="entry name" value="rpsL_bact"/>
    <property type="match status" value="1"/>
</dbReference>
<dbReference type="PANTHER" id="PTHR11652">
    <property type="entry name" value="30S RIBOSOMAL PROTEIN S12 FAMILY MEMBER"/>
    <property type="match status" value="1"/>
</dbReference>
<dbReference type="Pfam" id="PF00164">
    <property type="entry name" value="Ribosom_S12_S23"/>
    <property type="match status" value="1"/>
</dbReference>
<dbReference type="PIRSF" id="PIRSF002133">
    <property type="entry name" value="Ribosomal_S12/S23"/>
    <property type="match status" value="1"/>
</dbReference>
<dbReference type="PRINTS" id="PR01034">
    <property type="entry name" value="RIBOSOMALS12"/>
</dbReference>
<dbReference type="SUPFAM" id="SSF50249">
    <property type="entry name" value="Nucleic acid-binding proteins"/>
    <property type="match status" value="1"/>
</dbReference>
<dbReference type="PROSITE" id="PS00055">
    <property type="entry name" value="RIBOSOMAL_S12"/>
    <property type="match status" value="1"/>
</dbReference>
<proteinExistence type="inferred from homology"/>
<keyword id="KW-0150">Chloroplast</keyword>
<keyword id="KW-0934">Plastid</keyword>
<keyword id="KW-0687">Ribonucleoprotein</keyword>
<keyword id="KW-0689">Ribosomal protein</keyword>
<keyword id="KW-0694">RNA-binding</keyword>
<keyword id="KW-0699">rRNA-binding</keyword>